<evidence type="ECO:0000255" key="1">
    <source>
        <dbReference type="HAMAP-Rule" id="MF_00435"/>
    </source>
</evidence>
<evidence type="ECO:0000255" key="2">
    <source>
        <dbReference type="PROSITE-ProRule" id="PRU01197"/>
    </source>
</evidence>
<evidence type="ECO:0000255" key="3">
    <source>
        <dbReference type="PROSITE-ProRule" id="PRU01198"/>
    </source>
</evidence>
<feature type="chain" id="PRO_0000151354" description="Ketol-acid reductoisomerase (NADP(+))">
    <location>
        <begin position="1"/>
        <end position="491"/>
    </location>
</feature>
<feature type="domain" description="KARI N-terminal Rossmann" evidence="2">
    <location>
        <begin position="15"/>
        <end position="208"/>
    </location>
</feature>
<feature type="domain" description="KARI C-terminal knotted 1" evidence="3">
    <location>
        <begin position="209"/>
        <end position="344"/>
    </location>
</feature>
<feature type="domain" description="KARI C-terminal knotted 2" evidence="3">
    <location>
        <begin position="345"/>
        <end position="484"/>
    </location>
</feature>
<feature type="active site" evidence="1">
    <location>
        <position position="132"/>
    </location>
</feature>
<feature type="binding site" evidence="1">
    <location>
        <begin position="45"/>
        <end position="48"/>
    </location>
    <ligand>
        <name>NADP(+)</name>
        <dbReference type="ChEBI" id="CHEBI:58349"/>
    </ligand>
</feature>
<feature type="binding site" evidence="1">
    <location>
        <position position="68"/>
    </location>
    <ligand>
        <name>NADP(+)</name>
        <dbReference type="ChEBI" id="CHEBI:58349"/>
    </ligand>
</feature>
<feature type="binding site" evidence="1">
    <location>
        <position position="76"/>
    </location>
    <ligand>
        <name>NADP(+)</name>
        <dbReference type="ChEBI" id="CHEBI:58349"/>
    </ligand>
</feature>
<feature type="binding site" evidence="1">
    <location>
        <position position="78"/>
    </location>
    <ligand>
        <name>NADP(+)</name>
        <dbReference type="ChEBI" id="CHEBI:58349"/>
    </ligand>
</feature>
<feature type="binding site" evidence="1">
    <location>
        <begin position="108"/>
        <end position="110"/>
    </location>
    <ligand>
        <name>NADP(+)</name>
        <dbReference type="ChEBI" id="CHEBI:58349"/>
    </ligand>
</feature>
<feature type="binding site" evidence="1">
    <location>
        <position position="158"/>
    </location>
    <ligand>
        <name>NADP(+)</name>
        <dbReference type="ChEBI" id="CHEBI:58349"/>
    </ligand>
</feature>
<feature type="binding site" evidence="1">
    <location>
        <position position="217"/>
    </location>
    <ligand>
        <name>Mg(2+)</name>
        <dbReference type="ChEBI" id="CHEBI:18420"/>
        <label>1</label>
    </ligand>
</feature>
<feature type="binding site" evidence="1">
    <location>
        <position position="217"/>
    </location>
    <ligand>
        <name>Mg(2+)</name>
        <dbReference type="ChEBI" id="CHEBI:18420"/>
        <label>2</label>
    </ligand>
</feature>
<feature type="binding site" evidence="1">
    <location>
        <position position="221"/>
    </location>
    <ligand>
        <name>Mg(2+)</name>
        <dbReference type="ChEBI" id="CHEBI:18420"/>
        <label>1</label>
    </ligand>
</feature>
<feature type="binding site" evidence="1">
    <location>
        <position position="389"/>
    </location>
    <ligand>
        <name>Mg(2+)</name>
        <dbReference type="ChEBI" id="CHEBI:18420"/>
        <label>2</label>
    </ligand>
</feature>
<feature type="binding site" evidence="1">
    <location>
        <position position="393"/>
    </location>
    <ligand>
        <name>Mg(2+)</name>
        <dbReference type="ChEBI" id="CHEBI:18420"/>
        <label>2</label>
    </ligand>
</feature>
<feature type="binding site" evidence="1">
    <location>
        <position position="414"/>
    </location>
    <ligand>
        <name>substrate</name>
    </ligand>
</feature>
<comment type="function">
    <text evidence="1">Involved in the biosynthesis of branched-chain amino acids (BCAA). Catalyzes an alkyl-migration followed by a ketol-acid reduction of (S)-2-acetolactate (S2AL) to yield (R)-2,3-dihydroxy-isovalerate. In the isomerase reaction, S2AL is rearranged via a Mg-dependent methyl migration to produce 3-hydroxy-3-methyl-2-ketobutyrate (HMKB). In the reductase reaction, this 2-ketoacid undergoes a metal-dependent reduction by NADPH to yield (R)-2,3-dihydroxy-isovalerate.</text>
</comment>
<comment type="catalytic activity">
    <reaction evidence="1">
        <text>(2R)-2,3-dihydroxy-3-methylbutanoate + NADP(+) = (2S)-2-acetolactate + NADPH + H(+)</text>
        <dbReference type="Rhea" id="RHEA:22068"/>
        <dbReference type="ChEBI" id="CHEBI:15378"/>
        <dbReference type="ChEBI" id="CHEBI:49072"/>
        <dbReference type="ChEBI" id="CHEBI:57783"/>
        <dbReference type="ChEBI" id="CHEBI:58349"/>
        <dbReference type="ChEBI" id="CHEBI:58476"/>
        <dbReference type="EC" id="1.1.1.86"/>
    </reaction>
</comment>
<comment type="catalytic activity">
    <reaction evidence="1">
        <text>(2R,3R)-2,3-dihydroxy-3-methylpentanoate + NADP(+) = (S)-2-ethyl-2-hydroxy-3-oxobutanoate + NADPH + H(+)</text>
        <dbReference type="Rhea" id="RHEA:13493"/>
        <dbReference type="ChEBI" id="CHEBI:15378"/>
        <dbReference type="ChEBI" id="CHEBI:49256"/>
        <dbReference type="ChEBI" id="CHEBI:49258"/>
        <dbReference type="ChEBI" id="CHEBI:57783"/>
        <dbReference type="ChEBI" id="CHEBI:58349"/>
        <dbReference type="EC" id="1.1.1.86"/>
    </reaction>
</comment>
<comment type="cofactor">
    <cofactor evidence="1">
        <name>Mg(2+)</name>
        <dbReference type="ChEBI" id="CHEBI:18420"/>
    </cofactor>
    <text evidence="1">Binds 2 magnesium ions per subunit.</text>
</comment>
<comment type="pathway">
    <text evidence="1">Amino-acid biosynthesis; L-isoleucine biosynthesis; L-isoleucine from 2-oxobutanoate: step 2/4.</text>
</comment>
<comment type="pathway">
    <text evidence="1">Amino-acid biosynthesis; L-valine biosynthesis; L-valine from pyruvate: step 2/4.</text>
</comment>
<comment type="similarity">
    <text evidence="1">Belongs to the ketol-acid reductoisomerase family.</text>
</comment>
<dbReference type="EC" id="1.1.1.86" evidence="1"/>
<dbReference type="EMBL" id="AE005674">
    <property type="protein sequence ID" value="AAN45286.2"/>
    <property type="molecule type" value="Genomic_DNA"/>
</dbReference>
<dbReference type="EMBL" id="AE014073">
    <property type="protein sequence ID" value="AAP18911.1"/>
    <property type="molecule type" value="Genomic_DNA"/>
</dbReference>
<dbReference type="RefSeq" id="NP_709579.2">
    <property type="nucleotide sequence ID" value="NC_004337.2"/>
</dbReference>
<dbReference type="RefSeq" id="WP_005051956.1">
    <property type="nucleotide sequence ID" value="NZ_WPGW01000028.1"/>
</dbReference>
<dbReference type="SMR" id="Q7UB34"/>
<dbReference type="STRING" id="198214.SF3848"/>
<dbReference type="PaxDb" id="198214-SF3848"/>
<dbReference type="GeneID" id="1026032"/>
<dbReference type="KEGG" id="sfl:SF3848"/>
<dbReference type="KEGG" id="sfx:S3910"/>
<dbReference type="PATRIC" id="fig|198214.7.peg.4540"/>
<dbReference type="HOGENOM" id="CLU_551905_0_0_6"/>
<dbReference type="UniPathway" id="UPA00047">
    <property type="reaction ID" value="UER00056"/>
</dbReference>
<dbReference type="UniPathway" id="UPA00049">
    <property type="reaction ID" value="UER00060"/>
</dbReference>
<dbReference type="Proteomes" id="UP000001006">
    <property type="component" value="Chromosome"/>
</dbReference>
<dbReference type="Proteomes" id="UP000002673">
    <property type="component" value="Chromosome"/>
</dbReference>
<dbReference type="GO" id="GO:0005829">
    <property type="term" value="C:cytosol"/>
    <property type="evidence" value="ECO:0007669"/>
    <property type="project" value="TreeGrafter"/>
</dbReference>
<dbReference type="GO" id="GO:0004455">
    <property type="term" value="F:ketol-acid reductoisomerase activity"/>
    <property type="evidence" value="ECO:0007669"/>
    <property type="project" value="UniProtKB-UniRule"/>
</dbReference>
<dbReference type="GO" id="GO:0000287">
    <property type="term" value="F:magnesium ion binding"/>
    <property type="evidence" value="ECO:0007669"/>
    <property type="project" value="UniProtKB-UniRule"/>
</dbReference>
<dbReference type="GO" id="GO:0009097">
    <property type="term" value="P:isoleucine biosynthetic process"/>
    <property type="evidence" value="ECO:0007669"/>
    <property type="project" value="UniProtKB-UniRule"/>
</dbReference>
<dbReference type="GO" id="GO:0009099">
    <property type="term" value="P:L-valine biosynthetic process"/>
    <property type="evidence" value="ECO:0007669"/>
    <property type="project" value="UniProtKB-UniRule"/>
</dbReference>
<dbReference type="FunFam" id="1.10.1040.10:FF:000007">
    <property type="entry name" value="Ketol-acid reductoisomerase (NADP(+))"/>
    <property type="match status" value="1"/>
</dbReference>
<dbReference type="FunFam" id="3.40.50.720:FF:000043">
    <property type="entry name" value="Ketol-acid reductoisomerase (NADP(+))"/>
    <property type="match status" value="1"/>
</dbReference>
<dbReference type="Gene3D" id="1.10.1040.10">
    <property type="entry name" value="N-(1-d-carboxylethyl)-l-norvaline Dehydrogenase, domain 2"/>
    <property type="match status" value="1"/>
</dbReference>
<dbReference type="Gene3D" id="3.40.50.720">
    <property type="entry name" value="NAD(P)-binding Rossmann-like Domain"/>
    <property type="match status" value="1"/>
</dbReference>
<dbReference type="HAMAP" id="MF_00435">
    <property type="entry name" value="IlvC"/>
    <property type="match status" value="1"/>
</dbReference>
<dbReference type="InterPro" id="IPR008927">
    <property type="entry name" value="6-PGluconate_DH-like_C_sf"/>
</dbReference>
<dbReference type="InterPro" id="IPR013328">
    <property type="entry name" value="6PGD_dom2"/>
</dbReference>
<dbReference type="InterPro" id="IPR013023">
    <property type="entry name" value="KARI"/>
</dbReference>
<dbReference type="InterPro" id="IPR000506">
    <property type="entry name" value="KARI_C"/>
</dbReference>
<dbReference type="InterPro" id="IPR013116">
    <property type="entry name" value="KARI_N"/>
</dbReference>
<dbReference type="InterPro" id="IPR036291">
    <property type="entry name" value="NAD(P)-bd_dom_sf"/>
</dbReference>
<dbReference type="NCBIfam" id="TIGR00465">
    <property type="entry name" value="ilvC"/>
    <property type="match status" value="1"/>
</dbReference>
<dbReference type="NCBIfam" id="NF003557">
    <property type="entry name" value="PRK05225.1"/>
    <property type="match status" value="1"/>
</dbReference>
<dbReference type="PANTHER" id="PTHR21371">
    <property type="entry name" value="KETOL-ACID REDUCTOISOMERASE, MITOCHONDRIAL"/>
    <property type="match status" value="1"/>
</dbReference>
<dbReference type="PANTHER" id="PTHR21371:SF1">
    <property type="entry name" value="KETOL-ACID REDUCTOISOMERASE, MITOCHONDRIAL"/>
    <property type="match status" value="1"/>
</dbReference>
<dbReference type="Pfam" id="PF01450">
    <property type="entry name" value="KARI_C"/>
    <property type="match status" value="2"/>
</dbReference>
<dbReference type="Pfam" id="PF07991">
    <property type="entry name" value="KARI_N"/>
    <property type="match status" value="1"/>
</dbReference>
<dbReference type="SUPFAM" id="SSF48179">
    <property type="entry name" value="6-phosphogluconate dehydrogenase C-terminal domain-like"/>
    <property type="match status" value="2"/>
</dbReference>
<dbReference type="SUPFAM" id="SSF51735">
    <property type="entry name" value="NAD(P)-binding Rossmann-fold domains"/>
    <property type="match status" value="1"/>
</dbReference>
<dbReference type="PROSITE" id="PS51851">
    <property type="entry name" value="KARI_C"/>
    <property type="match status" value="2"/>
</dbReference>
<dbReference type="PROSITE" id="PS51850">
    <property type="entry name" value="KARI_N"/>
    <property type="match status" value="1"/>
</dbReference>
<sequence length="491" mass="54097">MANYFNTLNLRQQLAQLGKCRFMGRDEFADGASYLQGKKVVIVGCGAQGLNQGLNMRDSGLDISYALRKEAIAEKRASWRKATENGFKVGTYEELIPQADLVVNLTPDKQHSDVVRTVQPLMKDGAALGYSHGFNIVEVGEQIRKDITVVMVAPKCPGTEVREEYKRGFGVPTLIAVHPENDPKGEGMAIAKAWAAATGGHRAGVLESSFVAEVKSDLMGEQTILCGMLQAGSLLCFDKLVEEGTDPAYAEKLIQFGWETITEALKQGGITLMMDRLSNPAKLRAYALSEQLKEIMAPLFQKHMDDIISGEFSSGMMADWANDDKKLLTWREETGKTAFETAPQYEGKIGEQEYFDKGVLMIAMVKAGVELAFETMVDSGIIEESAYYESLHELPLIANTIVRKRLYEMNVVISDTAEYGNYLFSYACVPLLKPFMAELQPGDLGKAIPEGAVDNAQLRDVNEAIRSHAIEQVGKKLRGYMTDMKRIAVAG</sequence>
<accession>Q7UB34</accession>
<accession>Q83IX9</accession>
<protein>
    <recommendedName>
        <fullName evidence="1">Ketol-acid reductoisomerase (NADP(+))</fullName>
        <shortName evidence="1">KARI</shortName>
        <ecNumber evidence="1">1.1.1.86</ecNumber>
    </recommendedName>
    <alternativeName>
        <fullName evidence="1">Acetohydroxy-acid isomeroreductase</fullName>
        <shortName evidence="1">AHIR</shortName>
    </alternativeName>
    <alternativeName>
        <fullName evidence="1">Alpha-keto-beta-hydroxylacyl reductoisomerase</fullName>
    </alternativeName>
    <alternativeName>
        <fullName evidence="1">Ketol-acid reductoisomerase type 2</fullName>
    </alternativeName>
    <alternativeName>
        <fullName evidence="1">Ketol-acid reductoisomerase type II</fullName>
    </alternativeName>
</protein>
<name>ILVC_SHIFL</name>
<gene>
    <name evidence="1" type="primary">ilvC</name>
    <name type="synonym">ilvY</name>
    <name type="ordered locus">SF3848</name>
    <name type="ordered locus">S3910</name>
</gene>
<organism>
    <name type="scientific">Shigella flexneri</name>
    <dbReference type="NCBI Taxonomy" id="623"/>
    <lineage>
        <taxon>Bacteria</taxon>
        <taxon>Pseudomonadati</taxon>
        <taxon>Pseudomonadota</taxon>
        <taxon>Gammaproteobacteria</taxon>
        <taxon>Enterobacterales</taxon>
        <taxon>Enterobacteriaceae</taxon>
        <taxon>Shigella</taxon>
    </lineage>
</organism>
<keyword id="KW-0028">Amino-acid biosynthesis</keyword>
<keyword id="KW-0100">Branched-chain amino acid biosynthesis</keyword>
<keyword id="KW-0460">Magnesium</keyword>
<keyword id="KW-0479">Metal-binding</keyword>
<keyword id="KW-0521">NADP</keyword>
<keyword id="KW-0560">Oxidoreductase</keyword>
<keyword id="KW-1185">Reference proteome</keyword>
<keyword id="KW-0677">Repeat</keyword>
<reference key="1">
    <citation type="journal article" date="2002" name="Nucleic Acids Res.">
        <title>Genome sequence of Shigella flexneri 2a: insights into pathogenicity through comparison with genomes of Escherichia coli K12 and O157.</title>
        <authorList>
            <person name="Jin Q."/>
            <person name="Yuan Z."/>
            <person name="Xu J."/>
            <person name="Wang Y."/>
            <person name="Shen Y."/>
            <person name="Lu W."/>
            <person name="Wang J."/>
            <person name="Liu H."/>
            <person name="Yang J."/>
            <person name="Yang F."/>
            <person name="Zhang X."/>
            <person name="Zhang J."/>
            <person name="Yang G."/>
            <person name="Wu H."/>
            <person name="Qu D."/>
            <person name="Dong J."/>
            <person name="Sun L."/>
            <person name="Xue Y."/>
            <person name="Zhao A."/>
            <person name="Gao Y."/>
            <person name="Zhu J."/>
            <person name="Kan B."/>
            <person name="Ding K."/>
            <person name="Chen S."/>
            <person name="Cheng H."/>
            <person name="Yao Z."/>
            <person name="He B."/>
            <person name="Chen R."/>
            <person name="Ma D."/>
            <person name="Qiang B."/>
            <person name="Wen Y."/>
            <person name="Hou Y."/>
            <person name="Yu J."/>
        </authorList>
    </citation>
    <scope>NUCLEOTIDE SEQUENCE [LARGE SCALE GENOMIC DNA]</scope>
    <source>
        <strain>301 / Serotype 2a</strain>
    </source>
</reference>
<reference key="2">
    <citation type="journal article" date="2003" name="Infect. Immun.">
        <title>Complete genome sequence and comparative genomics of Shigella flexneri serotype 2a strain 2457T.</title>
        <authorList>
            <person name="Wei J."/>
            <person name="Goldberg M.B."/>
            <person name="Burland V."/>
            <person name="Venkatesan M.M."/>
            <person name="Deng W."/>
            <person name="Fournier G."/>
            <person name="Mayhew G.F."/>
            <person name="Plunkett G. III"/>
            <person name="Rose D.J."/>
            <person name="Darling A."/>
            <person name="Mau B."/>
            <person name="Perna N.T."/>
            <person name="Payne S.M."/>
            <person name="Runyen-Janecky L.J."/>
            <person name="Zhou S."/>
            <person name="Schwartz D.C."/>
            <person name="Blattner F.R."/>
        </authorList>
    </citation>
    <scope>NUCLEOTIDE SEQUENCE [LARGE SCALE GENOMIC DNA]</scope>
    <source>
        <strain>ATCC 700930 / 2457T / Serotype 2a</strain>
    </source>
</reference>
<proteinExistence type="inferred from homology"/>